<comment type="function">
    <text evidence="1">Member of the two-component regulatory system PhoP/PhoQ which regulates the expression of genes involved in virulence and resistance to host defense antimicrobial peptides. In low periplasmic Mg(2+), PhoQ functions as a membrane-associated protein kinase that undergoes autophosphorylation and subsequently transfers the phosphate to PhoP, which results in the expression of PhoP-activated genes (PAG) and repression of PhoP-repressed genes (PRG). In high periplasmic Mg(2+), acts as a protein phosphatase that dephosphorylates phospho-PhoP, which results in the repression of PAG and may lead to expression of some PRG (By similarity).</text>
</comment>
<comment type="catalytic activity">
    <reaction>
        <text>ATP + protein L-histidine = ADP + protein N-phospho-L-histidine.</text>
        <dbReference type="EC" id="2.7.13.3"/>
    </reaction>
</comment>
<comment type="subunit">
    <text evidence="1">Homodimer.</text>
</comment>
<comment type="subcellular location">
    <subcellularLocation>
        <location evidence="1">Cell inner membrane</location>
        <topology evidence="1">Multi-pass membrane protein</topology>
    </subcellularLocation>
</comment>
<proteinExistence type="inferred from homology"/>
<keyword id="KW-0067">ATP-binding</keyword>
<keyword id="KW-0997">Cell inner membrane</keyword>
<keyword id="KW-1003">Cell membrane</keyword>
<keyword id="KW-0341">Growth regulation</keyword>
<keyword id="KW-0378">Hydrolase</keyword>
<keyword id="KW-0418">Kinase</keyword>
<keyword id="KW-0460">Magnesium</keyword>
<keyword id="KW-0472">Membrane</keyword>
<keyword id="KW-0479">Metal-binding</keyword>
<keyword id="KW-0547">Nucleotide-binding</keyword>
<keyword id="KW-0597">Phosphoprotein</keyword>
<keyword id="KW-0904">Protein phosphatase</keyword>
<keyword id="KW-0808">Transferase</keyword>
<keyword id="KW-0812">Transmembrane</keyword>
<keyword id="KW-1133">Transmembrane helix</keyword>
<keyword id="KW-0902">Two-component regulatory system</keyword>
<keyword id="KW-0843">Virulence</keyword>
<reference key="1">
    <citation type="journal article" date="2004" name="Nat. Genet.">
        <title>Comparison of genome degradation in Paratyphi A and Typhi, human-restricted serovars of Salmonella enterica that cause typhoid.</title>
        <authorList>
            <person name="McClelland M."/>
            <person name="Sanderson K.E."/>
            <person name="Clifton S.W."/>
            <person name="Latreille P."/>
            <person name="Porwollik S."/>
            <person name="Sabo A."/>
            <person name="Meyer R."/>
            <person name="Bieri T."/>
            <person name="Ozersky P."/>
            <person name="McLellan M."/>
            <person name="Harkins C.R."/>
            <person name="Wang C."/>
            <person name="Nguyen C."/>
            <person name="Berghoff A."/>
            <person name="Elliott G."/>
            <person name="Kohlberg S."/>
            <person name="Strong C."/>
            <person name="Du F."/>
            <person name="Carter J."/>
            <person name="Kremizki C."/>
            <person name="Layman D."/>
            <person name="Leonard S."/>
            <person name="Sun H."/>
            <person name="Fulton L."/>
            <person name="Nash W."/>
            <person name="Miner T."/>
            <person name="Minx P."/>
            <person name="Delehaunty K."/>
            <person name="Fronick C."/>
            <person name="Magrini V."/>
            <person name="Nhan M."/>
            <person name="Warren W."/>
            <person name="Florea L."/>
            <person name="Spieth J."/>
            <person name="Wilson R.K."/>
        </authorList>
    </citation>
    <scope>NUCLEOTIDE SEQUENCE [LARGE SCALE GENOMIC DNA]</scope>
    <source>
        <strain>ATCC 9150 / SARB42</strain>
    </source>
</reference>
<dbReference type="EC" id="2.7.13.3"/>
<dbReference type="EC" id="3.1.3.-"/>
<dbReference type="EMBL" id="CP000026">
    <property type="protein sequence ID" value="AAV77547.1"/>
    <property type="molecule type" value="Genomic_DNA"/>
</dbReference>
<dbReference type="RefSeq" id="WP_001031687.1">
    <property type="nucleotide sequence ID" value="NC_006511.1"/>
</dbReference>
<dbReference type="SMR" id="Q5PMJ0"/>
<dbReference type="KEGG" id="spt:SPA1620"/>
<dbReference type="HOGENOM" id="CLU_000445_42_0_6"/>
<dbReference type="Proteomes" id="UP000008185">
    <property type="component" value="Chromosome"/>
</dbReference>
<dbReference type="GO" id="GO:0005886">
    <property type="term" value="C:plasma membrane"/>
    <property type="evidence" value="ECO:0007669"/>
    <property type="project" value="UniProtKB-SubCell"/>
</dbReference>
<dbReference type="GO" id="GO:0005524">
    <property type="term" value="F:ATP binding"/>
    <property type="evidence" value="ECO:0007669"/>
    <property type="project" value="UniProtKB-KW"/>
</dbReference>
<dbReference type="GO" id="GO:0046872">
    <property type="term" value="F:metal ion binding"/>
    <property type="evidence" value="ECO:0007669"/>
    <property type="project" value="UniProtKB-KW"/>
</dbReference>
<dbReference type="GO" id="GO:0004721">
    <property type="term" value="F:phosphoprotein phosphatase activity"/>
    <property type="evidence" value="ECO:0007669"/>
    <property type="project" value="UniProtKB-KW"/>
</dbReference>
<dbReference type="GO" id="GO:0000155">
    <property type="term" value="F:phosphorelay sensor kinase activity"/>
    <property type="evidence" value="ECO:0007669"/>
    <property type="project" value="InterPro"/>
</dbReference>
<dbReference type="CDD" id="cd16954">
    <property type="entry name" value="HATPase_PhoQ-like"/>
    <property type="match status" value="1"/>
</dbReference>
<dbReference type="FunFam" id="1.10.287.130:FF:000013">
    <property type="entry name" value="Sensor histidine kinase PhoQ"/>
    <property type="match status" value="1"/>
</dbReference>
<dbReference type="FunFam" id="3.30.450.140:FF:000001">
    <property type="entry name" value="Virulence sensor histidine kinase PhoQ"/>
    <property type="match status" value="1"/>
</dbReference>
<dbReference type="FunFam" id="3.30.565.10:FF:000019">
    <property type="entry name" value="Virulence sensor histidine kinase PhoQ"/>
    <property type="match status" value="1"/>
</dbReference>
<dbReference type="Gene3D" id="1.10.287.130">
    <property type="match status" value="1"/>
</dbReference>
<dbReference type="Gene3D" id="3.30.450.140">
    <property type="match status" value="1"/>
</dbReference>
<dbReference type="Gene3D" id="3.30.565.10">
    <property type="entry name" value="Histidine kinase-like ATPase, C-terminal domain"/>
    <property type="match status" value="1"/>
</dbReference>
<dbReference type="InterPro" id="IPR003660">
    <property type="entry name" value="HAMP_dom"/>
</dbReference>
<dbReference type="InterPro" id="IPR036890">
    <property type="entry name" value="HATPase_C_sf"/>
</dbReference>
<dbReference type="InterPro" id="IPR005467">
    <property type="entry name" value="His_kinase_dom"/>
</dbReference>
<dbReference type="InterPro" id="IPR036097">
    <property type="entry name" value="HisK_dim/P_sf"/>
</dbReference>
<dbReference type="InterPro" id="IPR015014">
    <property type="entry name" value="PhoQ_Sensor"/>
</dbReference>
<dbReference type="InterPro" id="IPR038429">
    <property type="entry name" value="PhoQ_Sensor_sf"/>
</dbReference>
<dbReference type="InterPro" id="IPR004358">
    <property type="entry name" value="Sig_transdc_His_kin-like_C"/>
</dbReference>
<dbReference type="InterPro" id="IPR050428">
    <property type="entry name" value="TCS_sensor_his_kinase"/>
</dbReference>
<dbReference type="NCBIfam" id="NF008077">
    <property type="entry name" value="PRK10815.1"/>
    <property type="match status" value="1"/>
</dbReference>
<dbReference type="PANTHER" id="PTHR45436">
    <property type="entry name" value="SENSOR HISTIDINE KINASE YKOH"/>
    <property type="match status" value="1"/>
</dbReference>
<dbReference type="PANTHER" id="PTHR45436:SF4">
    <property type="entry name" value="SENSOR PROTEIN PHOQ"/>
    <property type="match status" value="1"/>
</dbReference>
<dbReference type="Pfam" id="PF02518">
    <property type="entry name" value="HATPase_c"/>
    <property type="match status" value="1"/>
</dbReference>
<dbReference type="Pfam" id="PF08918">
    <property type="entry name" value="PhoQ_Sensor"/>
    <property type="match status" value="1"/>
</dbReference>
<dbReference type="PRINTS" id="PR00344">
    <property type="entry name" value="BCTRLSENSOR"/>
</dbReference>
<dbReference type="SMART" id="SM00387">
    <property type="entry name" value="HATPase_c"/>
    <property type="match status" value="1"/>
</dbReference>
<dbReference type="SUPFAM" id="SSF55874">
    <property type="entry name" value="ATPase domain of HSP90 chaperone/DNA topoisomerase II/histidine kinase"/>
    <property type="match status" value="1"/>
</dbReference>
<dbReference type="SUPFAM" id="SSF47384">
    <property type="entry name" value="Homodimeric domain of signal transducing histidine kinase"/>
    <property type="match status" value="1"/>
</dbReference>
<dbReference type="PROSITE" id="PS50885">
    <property type="entry name" value="HAMP"/>
    <property type="match status" value="1"/>
</dbReference>
<dbReference type="PROSITE" id="PS50109">
    <property type="entry name" value="HIS_KIN"/>
    <property type="match status" value="1"/>
</dbReference>
<evidence type="ECO:0000250" key="1"/>
<evidence type="ECO:0000255" key="2"/>
<evidence type="ECO:0000255" key="3">
    <source>
        <dbReference type="PROSITE-ProRule" id="PRU00102"/>
    </source>
</evidence>
<evidence type="ECO:0000255" key="4">
    <source>
        <dbReference type="PROSITE-ProRule" id="PRU00107"/>
    </source>
</evidence>
<name>PHOQ_SALPA</name>
<accession>Q5PMJ0</accession>
<feature type="chain" id="PRO_0000074841" description="Virulence sensor histidine kinase PhoQ">
    <location>
        <begin position="1"/>
        <end position="487"/>
    </location>
</feature>
<feature type="topological domain" description="Cytoplasmic" evidence="2">
    <location>
        <begin position="1"/>
        <end position="16"/>
    </location>
</feature>
<feature type="transmembrane region" description="Helical" evidence="2">
    <location>
        <begin position="17"/>
        <end position="37"/>
    </location>
</feature>
<feature type="topological domain" description="Periplasmic" evidence="2">
    <location>
        <begin position="38"/>
        <end position="193"/>
    </location>
</feature>
<feature type="transmembrane region" description="Helical" evidence="2">
    <location>
        <begin position="194"/>
        <end position="214"/>
    </location>
</feature>
<feature type="topological domain" description="Cytoplasmic" evidence="2">
    <location>
        <begin position="215"/>
        <end position="487"/>
    </location>
</feature>
<feature type="domain" description="HAMP" evidence="3">
    <location>
        <begin position="215"/>
        <end position="266"/>
    </location>
</feature>
<feature type="domain" description="Histidine kinase" evidence="4">
    <location>
        <begin position="274"/>
        <end position="481"/>
    </location>
</feature>
<feature type="binding site" evidence="1">
    <location>
        <position position="151"/>
    </location>
    <ligand>
        <name>a divalent metal cation</name>
        <dbReference type="ChEBI" id="CHEBI:60240"/>
    </ligand>
</feature>
<feature type="binding site" evidence="1">
    <location>
        <position position="152"/>
    </location>
    <ligand>
        <name>a divalent metal cation</name>
        <dbReference type="ChEBI" id="CHEBI:60240"/>
    </ligand>
</feature>
<feature type="binding site" evidence="1">
    <location>
        <begin position="386"/>
        <end position="394"/>
    </location>
    <ligand>
        <name>ATP</name>
        <dbReference type="ChEBI" id="CHEBI:30616"/>
    </ligand>
</feature>
<feature type="binding site" evidence="1">
    <location>
        <position position="386"/>
    </location>
    <ligand>
        <name>Mg(2+)</name>
        <dbReference type="ChEBI" id="CHEBI:18420"/>
    </ligand>
</feature>
<feature type="binding site" evidence="1">
    <location>
        <begin position="416"/>
        <end position="421"/>
    </location>
    <ligand>
        <name>ATP</name>
        <dbReference type="ChEBI" id="CHEBI:30616"/>
    </ligand>
</feature>
<feature type="binding site" evidence="1">
    <location>
        <begin position="435"/>
        <end position="447"/>
    </location>
    <ligand>
        <name>ATP</name>
        <dbReference type="ChEBI" id="CHEBI:30616"/>
    </ligand>
</feature>
<feature type="binding site" evidence="1">
    <location>
        <position position="443"/>
    </location>
    <ligand>
        <name>Mg(2+)</name>
        <dbReference type="ChEBI" id="CHEBI:18420"/>
    </ligand>
</feature>
<feature type="site" description="Plays a critical role in the switching between kinase and phosphatase states" evidence="1">
    <location>
        <position position="202"/>
    </location>
</feature>
<feature type="modified residue" description="Phosphohistidine; by autocatalysis" evidence="4">
    <location>
        <position position="277"/>
    </location>
</feature>
<organism>
    <name type="scientific">Salmonella paratyphi A (strain ATCC 9150 / SARB42)</name>
    <dbReference type="NCBI Taxonomy" id="295319"/>
    <lineage>
        <taxon>Bacteria</taxon>
        <taxon>Pseudomonadati</taxon>
        <taxon>Pseudomonadota</taxon>
        <taxon>Gammaproteobacteria</taxon>
        <taxon>Enterobacterales</taxon>
        <taxon>Enterobacteriaceae</taxon>
        <taxon>Salmonella</taxon>
    </lineage>
</organism>
<gene>
    <name type="primary">phoQ</name>
    <name type="ordered locus">SPA1620</name>
</gene>
<sequence>MNKFARHFLPLSLRVRFLLATAGVVLVLSLAYGIVALVGYSVSFDKTTFRLLRGESNLFYTLAKWENNKISVELPENLDMQSPTMTLIYDETGKLLWTQRNIPWLIKSIQPEWLKTNGFHEIETNVDATSTLLSEDHSAQEKLKEVREDDDDAEMTHSVAVNIYPATARMPQLTIVVVDTIPIELKRSYMVWSWFVYVLAANLLLVIPLLWIAAWWSLRPIEALAREVRELEDHHREMLNPETTRELTSLVRNLNQLLKSERERYNKYRTTLTDLTHSLKTPLAVLQSTLRSLRNEKMSVSKAEPVMLEQISRISQQIGYYLHRASMRGSGVLLSRELHPVAPLLDNLISALNKVYQRKGVNISMDISPEISFVGEQNDFVEVMGNVLDNACKYCLEFVEISARQTDDHLHIFVEDDGPGIPHSKRSLVFDRGQRADTLRPGQGVGLAVAREITEQYAGQIIASDSLLGGARMEVVFGRQHPTQKEE</sequence>
<protein>
    <recommendedName>
        <fullName>Virulence sensor histidine kinase PhoQ</fullName>
        <ecNumber>2.7.13.3</ecNumber>
        <ecNumber>3.1.3.-</ecNumber>
    </recommendedName>
    <alternativeName>
        <fullName>Sensor histidine protein kinase/phosphatase PhoQ</fullName>
    </alternativeName>
</protein>